<name>DUOX1_CANLF</name>
<protein>
    <recommendedName>
        <fullName>Dual oxidase 1</fullName>
        <ecNumber>1.11.1.-</ecNumber>
        <ecNumber>1.6.3.1</ecNumber>
    </recommendedName>
    <alternativeName>
        <fullName>NADPH thyroid oxidase 1</fullName>
        <shortName>Thyroid oxidase 1</shortName>
    </alternativeName>
</protein>
<comment type="function">
    <text>Generates hydrogen peroxide which is required for the activity of thyroid peroxidase/TPO and lactoperoxidase/LPO. Plays a role in thyroid hormones synthesis and lactoperoxidase-mediated antimicrobial defense at the surface of mucosa. May have its own peroxidase activity through its N-terminal peroxidase-like domain.</text>
</comment>
<comment type="catalytic activity">
    <reaction evidence="7">
        <text>NADH + O2 + H(+) = H2O2 + NAD(+)</text>
        <dbReference type="Rhea" id="RHEA:11264"/>
        <dbReference type="ChEBI" id="CHEBI:15378"/>
        <dbReference type="ChEBI" id="CHEBI:15379"/>
        <dbReference type="ChEBI" id="CHEBI:16240"/>
        <dbReference type="ChEBI" id="CHEBI:57540"/>
        <dbReference type="ChEBI" id="CHEBI:57945"/>
        <dbReference type="EC" id="1.6.3.1"/>
    </reaction>
</comment>
<comment type="catalytic activity">
    <reaction evidence="7">
        <text>NADPH + O2 + H(+) = H2O2 + NADP(+)</text>
        <dbReference type="Rhea" id="RHEA:11260"/>
        <dbReference type="ChEBI" id="CHEBI:15378"/>
        <dbReference type="ChEBI" id="CHEBI:15379"/>
        <dbReference type="ChEBI" id="CHEBI:16240"/>
        <dbReference type="ChEBI" id="CHEBI:57783"/>
        <dbReference type="ChEBI" id="CHEBI:58349"/>
        <dbReference type="EC" id="1.6.3.1"/>
    </reaction>
</comment>
<comment type="activity regulation">
    <text evidence="1 7">Peroxidase activity is inhibited by aminobenzohydrazide (By similarity). The NADPH oxidase activity is calcium-dependent.</text>
</comment>
<comment type="pathway">
    <text>Hormone biosynthesis; thyroid hormone biosynthesis.</text>
</comment>
<comment type="subunit">
    <text evidence="1 8">Interacts with TPO and CYBA (By similarity). Interacts with TXNDC11.</text>
</comment>
<comment type="subcellular location">
    <subcellularLocation>
        <location evidence="1">Apical cell membrane</location>
        <topology evidence="1">Multi-pass membrane protein</topology>
    </subcellularLocation>
    <text evidence="1">Localizes to the apical membrane of epithelial cells.</text>
</comment>
<comment type="tissue specificity">
    <text evidence="6">Expressed in thyrocytes (at protein level). Specifically expressed in thyroid.</text>
</comment>
<comment type="induction">
    <text evidence="6">By forskolin (at protein level). By thyrotropin.</text>
</comment>
<comment type="PTM">
    <text evidence="7">N-glycosylated.</text>
</comment>
<comment type="similarity">
    <text evidence="9">In the N-terminal section; belongs to the peroxidase family.</text>
</comment>
<organism>
    <name type="scientific">Canis lupus familiaris</name>
    <name type="common">Dog</name>
    <name type="synonym">Canis familiaris</name>
    <dbReference type="NCBI Taxonomy" id="9615"/>
    <lineage>
        <taxon>Eukaryota</taxon>
        <taxon>Metazoa</taxon>
        <taxon>Chordata</taxon>
        <taxon>Craniata</taxon>
        <taxon>Vertebrata</taxon>
        <taxon>Euteleostomi</taxon>
        <taxon>Mammalia</taxon>
        <taxon>Eutheria</taxon>
        <taxon>Laurasiatheria</taxon>
        <taxon>Carnivora</taxon>
        <taxon>Caniformia</taxon>
        <taxon>Canidae</taxon>
        <taxon>Canis</taxon>
    </lineage>
</organism>
<accession>Q9MZF4</accession>
<dbReference type="EC" id="1.11.1.-"/>
<dbReference type="EC" id="1.6.3.1"/>
<dbReference type="EMBL" id="AF230497">
    <property type="protein sequence ID" value="AAF73923.1"/>
    <property type="molecule type" value="mRNA"/>
</dbReference>
<dbReference type="RefSeq" id="NP_001003122.1">
    <property type="nucleotide sequence ID" value="NM_001003122.2"/>
</dbReference>
<dbReference type="RefSeq" id="XP_005638229.1">
    <property type="nucleotide sequence ID" value="XM_005638172.1"/>
</dbReference>
<dbReference type="RefSeq" id="XP_005638230.1">
    <property type="nucleotide sequence ID" value="XM_005638173.1"/>
</dbReference>
<dbReference type="RefSeq" id="XP_013964813.1">
    <property type="nucleotide sequence ID" value="XM_014109338.1"/>
</dbReference>
<dbReference type="RefSeq" id="XP_038297650.1">
    <property type="nucleotide sequence ID" value="XM_038441722.1"/>
</dbReference>
<dbReference type="RefSeq" id="XP_038297651.1">
    <property type="nucleotide sequence ID" value="XM_038441723.1"/>
</dbReference>
<dbReference type="RefSeq" id="XP_038297652.1">
    <property type="nucleotide sequence ID" value="XM_038441724.1"/>
</dbReference>
<dbReference type="RefSeq" id="XP_038297653.1">
    <property type="nucleotide sequence ID" value="XM_038441725.1"/>
</dbReference>
<dbReference type="RefSeq" id="XP_038297655.1">
    <property type="nucleotide sequence ID" value="XM_038441727.1"/>
</dbReference>
<dbReference type="RefSeq" id="XP_038297656.1">
    <property type="nucleotide sequence ID" value="XM_038441728.1"/>
</dbReference>
<dbReference type="RefSeq" id="XP_038297657.1">
    <property type="nucleotide sequence ID" value="XM_038441729.1"/>
</dbReference>
<dbReference type="RefSeq" id="XP_038297658.1">
    <property type="nucleotide sequence ID" value="XM_038441730.1"/>
</dbReference>
<dbReference type="RefSeq" id="XP_038297659.1">
    <property type="nucleotide sequence ID" value="XM_038441731.1"/>
</dbReference>
<dbReference type="SMR" id="Q9MZF4"/>
<dbReference type="FunCoup" id="Q9MZF4">
    <property type="interactions" value="3"/>
</dbReference>
<dbReference type="IntAct" id="Q9MZF4">
    <property type="interactions" value="1"/>
</dbReference>
<dbReference type="STRING" id="9615.ENSCAFP00000020209"/>
<dbReference type="PeroxiBase" id="3336">
    <property type="entry name" value="CfaDuOx01"/>
</dbReference>
<dbReference type="GlyCosmos" id="Q9MZF4">
    <property type="glycosylation" value="5 sites, No reported glycans"/>
</dbReference>
<dbReference type="PaxDb" id="9612-ENSCAFP00000020209"/>
<dbReference type="Ensembl" id="ENSCAFT00000021757.4">
    <property type="protein sequence ID" value="ENSCAFP00000020209.3"/>
    <property type="gene ID" value="ENSCAFG00000013715.5"/>
</dbReference>
<dbReference type="Ensembl" id="ENSCAFT00845054476.1">
    <property type="protein sequence ID" value="ENSCAFP00845042818.1"/>
    <property type="gene ID" value="ENSCAFG00845030684.1"/>
</dbReference>
<dbReference type="GeneID" id="403720"/>
<dbReference type="KEGG" id="cfa:403720"/>
<dbReference type="CTD" id="53905"/>
<dbReference type="VEuPathDB" id="HostDB:ENSCAFG00845030684"/>
<dbReference type="VGNC" id="VGNC:40120">
    <property type="gene designation" value="DUOX1"/>
</dbReference>
<dbReference type="eggNOG" id="KOG0039">
    <property type="taxonomic scope" value="Eukaryota"/>
</dbReference>
<dbReference type="GeneTree" id="ENSGT00940000161792"/>
<dbReference type="HOGENOM" id="CLU_004482_1_0_1"/>
<dbReference type="InParanoid" id="Q9MZF4"/>
<dbReference type="OMA" id="NASMLHP"/>
<dbReference type="OrthoDB" id="6019201at2759"/>
<dbReference type="TreeFam" id="TF105424"/>
<dbReference type="Reactome" id="R-CFA-209968">
    <property type="pathway name" value="Thyroxine biosynthesis"/>
</dbReference>
<dbReference type="UniPathway" id="UPA00194"/>
<dbReference type="Proteomes" id="UP000002254">
    <property type="component" value="Chromosome 30"/>
</dbReference>
<dbReference type="Proteomes" id="UP000694429">
    <property type="component" value="Unplaced"/>
</dbReference>
<dbReference type="Proteomes" id="UP000694542">
    <property type="component" value="Unplaced"/>
</dbReference>
<dbReference type="Proteomes" id="UP000805418">
    <property type="component" value="Chromosome 30"/>
</dbReference>
<dbReference type="Bgee" id="ENSCAFG00000013715">
    <property type="expression patterns" value="Expressed in nose and 32 other cell types or tissues"/>
</dbReference>
<dbReference type="GO" id="GO:0016324">
    <property type="term" value="C:apical plasma membrane"/>
    <property type="evidence" value="ECO:0000303"/>
    <property type="project" value="UniProtKB"/>
</dbReference>
<dbReference type="GO" id="GO:0031252">
    <property type="term" value="C:cell leading edge"/>
    <property type="evidence" value="ECO:0007669"/>
    <property type="project" value="Ensembl"/>
</dbReference>
<dbReference type="GO" id="GO:0009986">
    <property type="term" value="C:cell surface"/>
    <property type="evidence" value="ECO:0007669"/>
    <property type="project" value="Ensembl"/>
</dbReference>
<dbReference type="GO" id="GO:0005783">
    <property type="term" value="C:endoplasmic reticulum"/>
    <property type="evidence" value="ECO:0000250"/>
    <property type="project" value="UniProtKB"/>
</dbReference>
<dbReference type="GO" id="GO:0043020">
    <property type="term" value="C:NADPH oxidase complex"/>
    <property type="evidence" value="ECO:0000318"/>
    <property type="project" value="GO_Central"/>
</dbReference>
<dbReference type="GO" id="GO:0005886">
    <property type="term" value="C:plasma membrane"/>
    <property type="evidence" value="ECO:0000250"/>
    <property type="project" value="UniProtKB"/>
</dbReference>
<dbReference type="GO" id="GO:0005509">
    <property type="term" value="F:calcium ion binding"/>
    <property type="evidence" value="ECO:0007669"/>
    <property type="project" value="InterPro"/>
</dbReference>
<dbReference type="GO" id="GO:0020037">
    <property type="term" value="F:heme binding"/>
    <property type="evidence" value="ECO:0007669"/>
    <property type="project" value="InterPro"/>
</dbReference>
<dbReference type="GO" id="GO:0016174">
    <property type="term" value="F:NAD(P)H oxidase H2O2-forming activity"/>
    <property type="evidence" value="ECO:0000303"/>
    <property type="project" value="UniProtKB"/>
</dbReference>
<dbReference type="GO" id="GO:0106293">
    <property type="term" value="F:NADH oxidase H202-forming activity"/>
    <property type="evidence" value="ECO:0007669"/>
    <property type="project" value="RHEA"/>
</dbReference>
<dbReference type="GO" id="GO:0050661">
    <property type="term" value="F:NADP binding"/>
    <property type="evidence" value="ECO:0000303"/>
    <property type="project" value="UniProtKB"/>
</dbReference>
<dbReference type="GO" id="GO:0106294">
    <property type="term" value="F:NADPH oxidase H202-forming activity"/>
    <property type="evidence" value="ECO:0007669"/>
    <property type="project" value="RHEA"/>
</dbReference>
<dbReference type="GO" id="GO:0004601">
    <property type="term" value="F:peroxidase activity"/>
    <property type="evidence" value="ECO:0007669"/>
    <property type="project" value="UniProtKB-KW"/>
</dbReference>
<dbReference type="GO" id="GO:0016175">
    <property type="term" value="F:superoxide-generating NAD(P)H oxidase activity"/>
    <property type="evidence" value="ECO:0000318"/>
    <property type="project" value="GO_Central"/>
</dbReference>
<dbReference type="GO" id="GO:0042335">
    <property type="term" value="P:cuticle development"/>
    <property type="evidence" value="ECO:0000250"/>
    <property type="project" value="UniProtKB"/>
</dbReference>
<dbReference type="GO" id="GO:0019221">
    <property type="term" value="P:cytokine-mediated signaling pathway"/>
    <property type="evidence" value="ECO:0000250"/>
    <property type="project" value="UniProtKB"/>
</dbReference>
<dbReference type="GO" id="GO:0006952">
    <property type="term" value="P:defense response"/>
    <property type="evidence" value="ECO:0000318"/>
    <property type="project" value="GO_Central"/>
</dbReference>
<dbReference type="GO" id="GO:0042446">
    <property type="term" value="P:hormone biosynthetic process"/>
    <property type="evidence" value="ECO:0007669"/>
    <property type="project" value="UniProtKB-KW"/>
</dbReference>
<dbReference type="GO" id="GO:0050665">
    <property type="term" value="P:hydrogen peroxide biosynthetic process"/>
    <property type="evidence" value="ECO:0007669"/>
    <property type="project" value="Ensembl"/>
</dbReference>
<dbReference type="GO" id="GO:0042744">
    <property type="term" value="P:hydrogen peroxide catabolic process"/>
    <property type="evidence" value="ECO:0007669"/>
    <property type="project" value="UniProtKB-KW"/>
</dbReference>
<dbReference type="GO" id="GO:2000147">
    <property type="term" value="P:positive regulation of cell motility"/>
    <property type="evidence" value="ECO:0007669"/>
    <property type="project" value="Ensembl"/>
</dbReference>
<dbReference type="GO" id="GO:0090303">
    <property type="term" value="P:positive regulation of wound healing"/>
    <property type="evidence" value="ECO:0007669"/>
    <property type="project" value="Ensembl"/>
</dbReference>
<dbReference type="GO" id="GO:0051591">
    <property type="term" value="P:response to cAMP"/>
    <property type="evidence" value="ECO:0000250"/>
    <property type="project" value="UniProtKB"/>
</dbReference>
<dbReference type="GO" id="GO:0006979">
    <property type="term" value="P:response to oxidative stress"/>
    <property type="evidence" value="ECO:0007669"/>
    <property type="project" value="InterPro"/>
</dbReference>
<dbReference type="GO" id="GO:0042554">
    <property type="term" value="P:superoxide anion generation"/>
    <property type="evidence" value="ECO:0000318"/>
    <property type="project" value="GO_Central"/>
</dbReference>
<dbReference type="GO" id="GO:0006590">
    <property type="term" value="P:thyroid hormone generation"/>
    <property type="evidence" value="ECO:0007669"/>
    <property type="project" value="UniProtKB-UniPathway"/>
</dbReference>
<dbReference type="CDD" id="cd09820">
    <property type="entry name" value="dual_peroxidase_like"/>
    <property type="match status" value="1"/>
</dbReference>
<dbReference type="CDD" id="cd00051">
    <property type="entry name" value="EFh"/>
    <property type="match status" value="2"/>
</dbReference>
<dbReference type="CDD" id="cd06186">
    <property type="entry name" value="NOX_Duox_like_FAD_NADP"/>
    <property type="match status" value="1"/>
</dbReference>
<dbReference type="FunFam" id="2.40.30.10:FF:000043">
    <property type="entry name" value="dual oxidase 1"/>
    <property type="match status" value="1"/>
</dbReference>
<dbReference type="FunFam" id="1.10.640.10:FF:000004">
    <property type="entry name" value="Dual oxidase 2"/>
    <property type="match status" value="1"/>
</dbReference>
<dbReference type="FunFam" id="3.40.50.80:FF:000006">
    <property type="entry name" value="Dual oxidase 2"/>
    <property type="match status" value="1"/>
</dbReference>
<dbReference type="FunFam" id="1.10.238.10:FF:000095">
    <property type="entry name" value="dual oxidase 2"/>
    <property type="match status" value="1"/>
</dbReference>
<dbReference type="Gene3D" id="1.10.238.10">
    <property type="entry name" value="EF-hand"/>
    <property type="match status" value="1"/>
</dbReference>
<dbReference type="Gene3D" id="1.10.640.10">
    <property type="entry name" value="Haem peroxidase domain superfamily, animal type"/>
    <property type="match status" value="1"/>
</dbReference>
<dbReference type="Gene3D" id="3.40.50.80">
    <property type="entry name" value="Nucleotide-binding domain of ferredoxin-NADP reductase (FNR) module"/>
    <property type="match status" value="1"/>
</dbReference>
<dbReference type="Gene3D" id="2.40.30.10">
    <property type="entry name" value="Translation factors"/>
    <property type="match status" value="1"/>
</dbReference>
<dbReference type="InterPro" id="IPR034821">
    <property type="entry name" value="DUOX_peroxidase"/>
</dbReference>
<dbReference type="InterPro" id="IPR011992">
    <property type="entry name" value="EF-hand-dom_pair"/>
</dbReference>
<dbReference type="InterPro" id="IPR018247">
    <property type="entry name" value="EF_Hand_1_Ca_BS"/>
</dbReference>
<dbReference type="InterPro" id="IPR002048">
    <property type="entry name" value="EF_hand_dom"/>
</dbReference>
<dbReference type="InterPro" id="IPR013112">
    <property type="entry name" value="FAD-bd_8"/>
</dbReference>
<dbReference type="InterPro" id="IPR017927">
    <property type="entry name" value="FAD-bd_FR_type"/>
</dbReference>
<dbReference type="InterPro" id="IPR013130">
    <property type="entry name" value="Fe3_Rdtase_TM_dom"/>
</dbReference>
<dbReference type="InterPro" id="IPR013121">
    <property type="entry name" value="Fe_red_NAD-bd_6"/>
</dbReference>
<dbReference type="InterPro" id="IPR039261">
    <property type="entry name" value="FNR_nucleotide-bd"/>
</dbReference>
<dbReference type="InterPro" id="IPR019791">
    <property type="entry name" value="Haem_peroxidase_animal"/>
</dbReference>
<dbReference type="InterPro" id="IPR010255">
    <property type="entry name" value="Haem_peroxidase_sf"/>
</dbReference>
<dbReference type="InterPro" id="IPR037120">
    <property type="entry name" value="Haem_peroxidase_sf_animal"/>
</dbReference>
<dbReference type="InterPro" id="IPR050369">
    <property type="entry name" value="RBOH/FRE"/>
</dbReference>
<dbReference type="InterPro" id="IPR017938">
    <property type="entry name" value="Riboflavin_synthase-like_b-brl"/>
</dbReference>
<dbReference type="PANTHER" id="PTHR11972:SF75">
    <property type="entry name" value="DUAL OXIDASE 1"/>
    <property type="match status" value="1"/>
</dbReference>
<dbReference type="PANTHER" id="PTHR11972">
    <property type="entry name" value="NADPH OXIDASE"/>
    <property type="match status" value="1"/>
</dbReference>
<dbReference type="Pfam" id="PF03098">
    <property type="entry name" value="An_peroxidase"/>
    <property type="match status" value="1"/>
</dbReference>
<dbReference type="Pfam" id="PF00036">
    <property type="entry name" value="EF-hand_1"/>
    <property type="match status" value="1"/>
</dbReference>
<dbReference type="Pfam" id="PF13499">
    <property type="entry name" value="EF-hand_7"/>
    <property type="match status" value="1"/>
</dbReference>
<dbReference type="Pfam" id="PF08022">
    <property type="entry name" value="FAD_binding_8"/>
    <property type="match status" value="1"/>
</dbReference>
<dbReference type="Pfam" id="PF01794">
    <property type="entry name" value="Ferric_reduct"/>
    <property type="match status" value="1"/>
</dbReference>
<dbReference type="Pfam" id="PF08030">
    <property type="entry name" value="NAD_binding_6"/>
    <property type="match status" value="1"/>
</dbReference>
<dbReference type="PRINTS" id="PR00457">
    <property type="entry name" value="ANPEROXIDASE"/>
</dbReference>
<dbReference type="SFLD" id="SFLDS00052">
    <property type="entry name" value="Ferric_Reductase_Domain"/>
    <property type="match status" value="1"/>
</dbReference>
<dbReference type="SFLD" id="SFLDG01168">
    <property type="entry name" value="Ferric_reductase_subgroup_(FRE"/>
    <property type="match status" value="1"/>
</dbReference>
<dbReference type="SFLD" id="SFLDG01169">
    <property type="entry name" value="NADPH_oxidase_subgroup_(NOX)"/>
    <property type="match status" value="1"/>
</dbReference>
<dbReference type="SMART" id="SM00054">
    <property type="entry name" value="EFh"/>
    <property type="match status" value="2"/>
</dbReference>
<dbReference type="SUPFAM" id="SSF47473">
    <property type="entry name" value="EF-hand"/>
    <property type="match status" value="1"/>
</dbReference>
<dbReference type="SUPFAM" id="SSF52343">
    <property type="entry name" value="Ferredoxin reductase-like, C-terminal NADP-linked domain"/>
    <property type="match status" value="1"/>
</dbReference>
<dbReference type="SUPFAM" id="SSF48113">
    <property type="entry name" value="Heme-dependent peroxidases"/>
    <property type="match status" value="1"/>
</dbReference>
<dbReference type="SUPFAM" id="SSF63380">
    <property type="entry name" value="Riboflavin synthase domain-like"/>
    <property type="match status" value="1"/>
</dbReference>
<dbReference type="PROSITE" id="PS00018">
    <property type="entry name" value="EF_HAND_1"/>
    <property type="match status" value="2"/>
</dbReference>
<dbReference type="PROSITE" id="PS50222">
    <property type="entry name" value="EF_HAND_2"/>
    <property type="match status" value="3"/>
</dbReference>
<dbReference type="PROSITE" id="PS51384">
    <property type="entry name" value="FAD_FR"/>
    <property type="match status" value="1"/>
</dbReference>
<dbReference type="PROSITE" id="PS50292">
    <property type="entry name" value="PEROXIDASE_3"/>
    <property type="match status" value="1"/>
</dbReference>
<sequence length="1551" mass="176716">MGFCLALTWTFLVGSWTSMGAQKPISWEVQRFDGWYNNLMEHKWGSKGSRLQRLVPASYADGVYQPLGEPHLPNPRDLSNAAMRGPAGQASLRNRTVLGVFFGYHVLSDLVSVETPGCPAEFLNIRIPPGDPVFDPNGRGDVVLPFQRSRWDPESGQSPSNPRDLTNAVTGWLDGSAIYGSSHSWSDALRSFSGGQLASGPDPAFPRNAQPPLLMWSAPDPASGQRGPGGLYAFGAERGNRDPFLQALGLLWFRYHNLCAQRLARQHPHWGDEELFQHARKRVIATYQNIALYEWLPSFLQQAPVKYAGYNPFLDPSISPEFLVASEQFFSTMVPPGIYMRNASCHFQEVINRNSSISRALRVCNSYWSRKHPNLRRAEDVDALLLGMASQIAEREDHVVVEDVLDFWPGSLKFSRTDHVAGCLQRGRDLGLPSYTKARAALGLPPITRWQDINPALSQNNHTVLEATAALYNQDLSQLELLPGGLLESHGDPGPLFSAIVLNQFVRLRDGDRYWFENTRNGLFSEEEIAEIRNTSLRDVLVAVTNMNPSTLQPNVFFWHMGDPCPQPRQLSTQGLPACAPSTMQDYFEGSGFGFGVTIGTLCCFPLVSLLSAWIVARLRKKNFKKLQGQDRKSVMSEKLVGGMEALEWQGHKEPCRPVLVHLQPGQICVVDGRLSVLRTIQLRPPQQVNLILSGNRGRRALLLKIPKEYDLVLLFNLEEERQVLVENLRGALKESGLKFQEWELREQELMRTAVTRQQRSHLLETFFRHLFSQVLDIDQADAGTLPLDSSQKVQEALTCELSRAEFAESLGLKPQDMFVESMFSLADKDGNGYLSFREFLDILVVFMKGSPEEKSRLMFRMYDFDGNGLISKDEFIRMLRSFIEISNNCLSKAQLTEVVESMFRESGFQDKEELTWEDFHFMLRDHDSELRFTQLCVRGVEVPEVIKDLCRRASYISQEKICPSPRVSARCPHSNTEVEWTPQRLQCPVDTDPPQEIRRRFGKKVTSFQPLLFTEAQREKFQRSRRHQTLQQFKRFIENYRRHIGCVAVFYAITGGLFLERAYYYAFGAHHMGITDTTRVGIILSRGTAASISFMFSYILLTMCRNLITFLRETFLNRYVPFDAAVDFHRLIASTAIVLTVLHSAGHVVNVYLFSISPLSVLSCLFPGLFHNDGSEFPQKYYWWFFQTVPGLTGVMLLLVLAIMYVFASHHFRRHSFRGFWLTHHLYILLYVLLIIHGSFGLIQLPRFHIFFLVPALIYVGDKLVSLSRKKVEISVVKAELLPSGVTHLQFQRPQGFEYKSGQWVQIACLALGTTEYHPFTLTSAPHEDTLSLHIRAAGPWTTRLREIYSPPTGDGCAKYPKLYLDGPFGEGHQEWHKFEVSVLVGGGIGVTPFASILKDLVFKSSVSCQVFCKKIYFIWVTRTQRQFEWLADIIREVEENDCQDLVSVHIYITQLAEKFDLRTTMLYICERHFQKVLNRSLFTGLRSITHFGRPPFEPFFKSLQEVHPQVRKIGVFSCGPPGMTKNVEKACQLINRQDRTHFSHHYENF</sequence>
<keyword id="KW-0106">Calcium</keyword>
<keyword id="KW-1003">Cell membrane</keyword>
<keyword id="KW-0274">FAD</keyword>
<keyword id="KW-0285">Flavoprotein</keyword>
<keyword id="KW-0325">Glycoprotein</keyword>
<keyword id="KW-0376">Hydrogen peroxide</keyword>
<keyword id="KW-0472">Membrane</keyword>
<keyword id="KW-0479">Metal-binding</keyword>
<keyword id="KW-0521">NADP</keyword>
<keyword id="KW-0560">Oxidoreductase</keyword>
<keyword id="KW-0575">Peroxidase</keyword>
<keyword id="KW-1185">Reference proteome</keyword>
<keyword id="KW-0677">Repeat</keyword>
<keyword id="KW-0732">Signal</keyword>
<keyword id="KW-0893">Thyroid hormones biosynthesis</keyword>
<keyword id="KW-0812">Transmembrane</keyword>
<keyword id="KW-1133">Transmembrane helix</keyword>
<proteinExistence type="evidence at protein level"/>
<feature type="signal peptide" evidence="2">
    <location>
        <begin position="1"/>
        <end position="21"/>
    </location>
</feature>
<feature type="chain" id="PRO_0000223347" description="Dual oxidase 1">
    <location>
        <begin position="22"/>
        <end position="1551"/>
    </location>
</feature>
<feature type="topological domain" description="Extracellular" evidence="2">
    <location>
        <begin position="22"/>
        <end position="596"/>
    </location>
</feature>
<feature type="transmembrane region" description="Helical" evidence="2">
    <location>
        <begin position="597"/>
        <end position="617"/>
    </location>
</feature>
<feature type="topological domain" description="Cytoplasmic" evidence="2">
    <location>
        <begin position="618"/>
        <end position="1044"/>
    </location>
</feature>
<feature type="transmembrane region" description="Helical" evidence="2">
    <location>
        <begin position="1045"/>
        <end position="1065"/>
    </location>
</feature>
<feature type="topological domain" description="Extracellular" evidence="2">
    <location>
        <begin position="1066"/>
        <end position="1080"/>
    </location>
</feature>
<feature type="transmembrane region" description="Helical" evidence="2">
    <location>
        <begin position="1081"/>
        <end position="1101"/>
    </location>
</feature>
<feature type="topological domain" description="Cytoplasmic" evidence="2">
    <location>
        <begin position="1102"/>
        <end position="1151"/>
    </location>
</feature>
<feature type="transmembrane region" description="Helical" evidence="2">
    <location>
        <begin position="1152"/>
        <end position="1172"/>
    </location>
</feature>
<feature type="topological domain" description="Extracellular" evidence="2">
    <location>
        <begin position="1173"/>
        <end position="1188"/>
    </location>
</feature>
<feature type="transmembrane region" description="Helical" evidence="2">
    <location>
        <begin position="1189"/>
        <end position="1209"/>
    </location>
</feature>
<feature type="topological domain" description="Cytoplasmic" evidence="2">
    <location>
        <begin position="1210"/>
        <end position="1226"/>
    </location>
</feature>
<feature type="transmembrane region" description="Helical" evidence="2">
    <location>
        <begin position="1227"/>
        <end position="1247"/>
    </location>
</feature>
<feature type="topological domain" description="Extracellular" evidence="2">
    <location>
        <position position="1248"/>
    </location>
</feature>
<feature type="transmembrane region" description="Helical" evidence="2">
    <location>
        <begin position="1249"/>
        <end position="1269"/>
    </location>
</feature>
<feature type="topological domain" description="Cytoplasmic" evidence="2">
    <location>
        <begin position="1270"/>
        <end position="1551"/>
    </location>
</feature>
<feature type="domain" description="EF-hand 1" evidence="3">
    <location>
        <begin position="815"/>
        <end position="850"/>
    </location>
</feature>
<feature type="domain" description="EF-hand 2" evidence="3">
    <location>
        <begin position="851"/>
        <end position="886"/>
    </location>
</feature>
<feature type="domain" description="EF-hand 3" evidence="3">
    <location>
        <begin position="895"/>
        <end position="930"/>
    </location>
</feature>
<feature type="domain" description="Ferric oxidoreductase">
    <location>
        <begin position="1087"/>
        <end position="1269"/>
    </location>
</feature>
<feature type="domain" description="FAD-binding FR-type" evidence="4">
    <location>
        <begin position="1270"/>
        <end position="1376"/>
    </location>
</feature>
<feature type="region of interest" description="Peroxidase-like; mediates peroxidase activity" evidence="1">
    <location>
        <begin position="26"/>
        <end position="593"/>
    </location>
</feature>
<feature type="region of interest" description="Disordered" evidence="5">
    <location>
        <begin position="197"/>
        <end position="222"/>
    </location>
</feature>
<feature type="region of interest" description="Interaction with TXNDC11" evidence="8">
    <location>
        <begin position="956"/>
        <end position="1248"/>
    </location>
</feature>
<feature type="binding site" evidence="3">
    <location>
        <position position="828"/>
    </location>
    <ligand>
        <name>Ca(2+)</name>
        <dbReference type="ChEBI" id="CHEBI:29108"/>
        <label>1</label>
    </ligand>
</feature>
<feature type="binding site" evidence="3">
    <location>
        <position position="830"/>
    </location>
    <ligand>
        <name>Ca(2+)</name>
        <dbReference type="ChEBI" id="CHEBI:29108"/>
        <label>1</label>
    </ligand>
</feature>
<feature type="binding site" evidence="3">
    <location>
        <position position="832"/>
    </location>
    <ligand>
        <name>Ca(2+)</name>
        <dbReference type="ChEBI" id="CHEBI:29108"/>
        <label>1</label>
    </ligand>
</feature>
<feature type="binding site" evidence="3">
    <location>
        <position position="834"/>
    </location>
    <ligand>
        <name>Ca(2+)</name>
        <dbReference type="ChEBI" id="CHEBI:29108"/>
        <label>1</label>
    </ligand>
</feature>
<feature type="binding site" evidence="3">
    <location>
        <position position="839"/>
    </location>
    <ligand>
        <name>Ca(2+)</name>
        <dbReference type="ChEBI" id="CHEBI:29108"/>
        <label>1</label>
    </ligand>
</feature>
<feature type="binding site" evidence="3">
    <location>
        <position position="864"/>
    </location>
    <ligand>
        <name>Ca(2+)</name>
        <dbReference type="ChEBI" id="CHEBI:29108"/>
        <label>2</label>
    </ligand>
</feature>
<feature type="binding site" evidence="3">
    <location>
        <position position="866"/>
    </location>
    <ligand>
        <name>Ca(2+)</name>
        <dbReference type="ChEBI" id="CHEBI:29108"/>
        <label>2</label>
    </ligand>
</feature>
<feature type="binding site" evidence="3">
    <location>
        <position position="868"/>
    </location>
    <ligand>
        <name>Ca(2+)</name>
        <dbReference type="ChEBI" id="CHEBI:29108"/>
        <label>2</label>
    </ligand>
</feature>
<feature type="binding site" evidence="3">
    <location>
        <position position="875"/>
    </location>
    <ligand>
        <name>Ca(2+)</name>
        <dbReference type="ChEBI" id="CHEBI:29108"/>
        <label>2</label>
    </ligand>
</feature>
<feature type="glycosylation site" description="N-linked (GlcNAc...) asparagine" evidence="2">
    <location>
        <position position="94"/>
    </location>
</feature>
<feature type="glycosylation site" description="N-linked (GlcNAc...) asparagine" evidence="2">
    <location>
        <position position="342"/>
    </location>
</feature>
<feature type="glycosylation site" description="N-linked (GlcNAc...) asparagine" evidence="2">
    <location>
        <position position="354"/>
    </location>
</feature>
<feature type="glycosylation site" description="N-linked (GlcNAc...) asparagine" evidence="2">
    <location>
        <position position="461"/>
    </location>
</feature>
<feature type="glycosylation site" description="N-linked (GlcNAc...) asparagine" evidence="2">
    <location>
        <position position="534"/>
    </location>
</feature>
<gene>
    <name type="primary">DUOX1</name>
    <name type="synonym">THOX1</name>
</gene>
<reference key="1">
    <citation type="journal article" date="2000" name="J. Biol. Chem.">
        <title>Cloning of two human thyroid cDNAs encoding new members of the NADPH oxidase family.</title>
        <authorList>
            <person name="De Deken X."/>
            <person name="Wang D."/>
            <person name="Many M.-C."/>
            <person name="Costagliola S."/>
            <person name="Libert F."/>
            <person name="Vassart G."/>
            <person name="Dumont J.E."/>
            <person name="Miot F."/>
        </authorList>
    </citation>
    <scope>NUCLEOTIDE SEQUENCE [MRNA]</scope>
    <scope>TISSUE SPECIFICITY</scope>
    <scope>INDUCTION</scope>
</reference>
<reference key="2">
    <citation type="journal article" date="2002" name="Exp. Cell Res.">
        <title>Characterization of ThOX proteins as components of the thyroid H(2)O(2)-generating system.</title>
        <authorList>
            <person name="De Deken X."/>
            <person name="Wang D."/>
            <person name="Dumont J.E."/>
            <person name="Miot F."/>
        </authorList>
    </citation>
    <scope>SUBCELLULAR LOCATION</scope>
    <scope>CATALYTIC ACTIVITY</scope>
    <scope>ACTIVITY REGULATION</scope>
    <scope>GLYCOSYLATION</scope>
</reference>
<reference key="3">
    <citation type="journal article" date="2005" name="J. Biol. Chem.">
        <title>Identification of a novel partner of duox: EFP1, a thioredoxin-related protein.</title>
        <authorList>
            <person name="Wang D."/>
            <person name="De Deken X."/>
            <person name="Milenkovic M."/>
            <person name="Song Y."/>
            <person name="Pirson I."/>
            <person name="Dumont J.E."/>
            <person name="Miot F."/>
        </authorList>
    </citation>
    <scope>INTERACTION WITH TXNDC11</scope>
</reference>
<evidence type="ECO:0000250" key="1"/>
<evidence type="ECO:0000255" key="2"/>
<evidence type="ECO:0000255" key="3">
    <source>
        <dbReference type="PROSITE-ProRule" id="PRU00448"/>
    </source>
</evidence>
<evidence type="ECO:0000255" key="4">
    <source>
        <dbReference type="PROSITE-ProRule" id="PRU00716"/>
    </source>
</evidence>
<evidence type="ECO:0000256" key="5">
    <source>
        <dbReference type="SAM" id="MobiDB-lite"/>
    </source>
</evidence>
<evidence type="ECO:0000269" key="6">
    <source>
    </source>
</evidence>
<evidence type="ECO:0000269" key="7">
    <source>
    </source>
</evidence>
<evidence type="ECO:0000269" key="8">
    <source>
    </source>
</evidence>
<evidence type="ECO:0000305" key="9"/>